<feature type="chain" id="PRO_1000073486" description="Protein translocase subunit SecA">
    <location>
        <begin position="1"/>
        <end position="787"/>
    </location>
</feature>
<feature type="binding site" evidence="1">
    <location>
        <position position="85"/>
    </location>
    <ligand>
        <name>ATP</name>
        <dbReference type="ChEBI" id="CHEBI:30616"/>
    </ligand>
</feature>
<feature type="binding site" evidence="1">
    <location>
        <begin position="103"/>
        <end position="107"/>
    </location>
    <ligand>
        <name>ATP</name>
        <dbReference type="ChEBI" id="CHEBI:30616"/>
    </ligand>
</feature>
<feature type="binding site" evidence="1">
    <location>
        <position position="492"/>
    </location>
    <ligand>
        <name>ATP</name>
        <dbReference type="ChEBI" id="CHEBI:30616"/>
    </ligand>
</feature>
<proteinExistence type="inferred from homology"/>
<dbReference type="EC" id="7.4.2.8" evidence="1"/>
<dbReference type="EMBL" id="CR936503">
    <property type="protein sequence ID" value="CAI54795.1"/>
    <property type="molecule type" value="Genomic_DNA"/>
</dbReference>
<dbReference type="RefSeq" id="WP_011374203.1">
    <property type="nucleotide sequence ID" value="NC_007576.1"/>
</dbReference>
<dbReference type="SMR" id="Q38YD2"/>
<dbReference type="STRING" id="314315.LCA_0495"/>
<dbReference type="GeneID" id="57133358"/>
<dbReference type="KEGG" id="lsa:LCA_0495"/>
<dbReference type="eggNOG" id="COG0653">
    <property type="taxonomic scope" value="Bacteria"/>
</dbReference>
<dbReference type="HOGENOM" id="CLU_005314_3_0_9"/>
<dbReference type="OrthoDB" id="9805579at2"/>
<dbReference type="Proteomes" id="UP000002707">
    <property type="component" value="Chromosome"/>
</dbReference>
<dbReference type="GO" id="GO:0031522">
    <property type="term" value="C:cell envelope Sec protein transport complex"/>
    <property type="evidence" value="ECO:0007669"/>
    <property type="project" value="TreeGrafter"/>
</dbReference>
<dbReference type="GO" id="GO:0005829">
    <property type="term" value="C:cytosol"/>
    <property type="evidence" value="ECO:0007669"/>
    <property type="project" value="TreeGrafter"/>
</dbReference>
<dbReference type="GO" id="GO:0005886">
    <property type="term" value="C:plasma membrane"/>
    <property type="evidence" value="ECO:0007669"/>
    <property type="project" value="UniProtKB-SubCell"/>
</dbReference>
<dbReference type="GO" id="GO:0005524">
    <property type="term" value="F:ATP binding"/>
    <property type="evidence" value="ECO:0007669"/>
    <property type="project" value="UniProtKB-UniRule"/>
</dbReference>
<dbReference type="GO" id="GO:0008564">
    <property type="term" value="F:protein-exporting ATPase activity"/>
    <property type="evidence" value="ECO:0007669"/>
    <property type="project" value="UniProtKB-EC"/>
</dbReference>
<dbReference type="GO" id="GO:0065002">
    <property type="term" value="P:intracellular protein transmembrane transport"/>
    <property type="evidence" value="ECO:0007669"/>
    <property type="project" value="UniProtKB-UniRule"/>
</dbReference>
<dbReference type="GO" id="GO:0017038">
    <property type="term" value="P:protein import"/>
    <property type="evidence" value="ECO:0007669"/>
    <property type="project" value="InterPro"/>
</dbReference>
<dbReference type="GO" id="GO:0006605">
    <property type="term" value="P:protein targeting"/>
    <property type="evidence" value="ECO:0007669"/>
    <property type="project" value="UniProtKB-UniRule"/>
</dbReference>
<dbReference type="GO" id="GO:0043952">
    <property type="term" value="P:protein transport by the Sec complex"/>
    <property type="evidence" value="ECO:0007669"/>
    <property type="project" value="TreeGrafter"/>
</dbReference>
<dbReference type="CDD" id="cd17928">
    <property type="entry name" value="DEXDc_SecA"/>
    <property type="match status" value="1"/>
</dbReference>
<dbReference type="CDD" id="cd18803">
    <property type="entry name" value="SF2_C_secA"/>
    <property type="match status" value="1"/>
</dbReference>
<dbReference type="FunFam" id="1.10.3060.10:FF:000002">
    <property type="entry name" value="Preprotein translocase subunit SecA"/>
    <property type="match status" value="1"/>
</dbReference>
<dbReference type="FunFam" id="3.40.50.300:FF:000429">
    <property type="entry name" value="Preprotein translocase subunit SecA"/>
    <property type="match status" value="1"/>
</dbReference>
<dbReference type="FunFam" id="3.90.1440.10:FF:000001">
    <property type="entry name" value="Preprotein translocase subunit SecA"/>
    <property type="match status" value="1"/>
</dbReference>
<dbReference type="Gene3D" id="1.10.3060.10">
    <property type="entry name" value="Helical scaffold and wing domains of SecA"/>
    <property type="match status" value="1"/>
</dbReference>
<dbReference type="Gene3D" id="3.40.50.300">
    <property type="entry name" value="P-loop containing nucleotide triphosphate hydrolases"/>
    <property type="match status" value="2"/>
</dbReference>
<dbReference type="Gene3D" id="3.90.1440.10">
    <property type="entry name" value="SecA, preprotein cross-linking domain"/>
    <property type="match status" value="1"/>
</dbReference>
<dbReference type="HAMAP" id="MF_01382">
    <property type="entry name" value="SecA"/>
    <property type="match status" value="1"/>
</dbReference>
<dbReference type="InterPro" id="IPR014001">
    <property type="entry name" value="Helicase_ATP-bd"/>
</dbReference>
<dbReference type="InterPro" id="IPR001650">
    <property type="entry name" value="Helicase_C-like"/>
</dbReference>
<dbReference type="InterPro" id="IPR027417">
    <property type="entry name" value="P-loop_NTPase"/>
</dbReference>
<dbReference type="InterPro" id="IPR000185">
    <property type="entry name" value="SecA"/>
</dbReference>
<dbReference type="InterPro" id="IPR020937">
    <property type="entry name" value="SecA_CS"/>
</dbReference>
<dbReference type="InterPro" id="IPR011115">
    <property type="entry name" value="SecA_DEAD"/>
</dbReference>
<dbReference type="InterPro" id="IPR014018">
    <property type="entry name" value="SecA_motor_DEAD"/>
</dbReference>
<dbReference type="InterPro" id="IPR011130">
    <property type="entry name" value="SecA_preprotein_X-link_dom"/>
</dbReference>
<dbReference type="InterPro" id="IPR044722">
    <property type="entry name" value="SecA_SF2_C"/>
</dbReference>
<dbReference type="InterPro" id="IPR011116">
    <property type="entry name" value="SecA_Wing/Scaffold"/>
</dbReference>
<dbReference type="InterPro" id="IPR036266">
    <property type="entry name" value="SecA_Wing/Scaffold_sf"/>
</dbReference>
<dbReference type="InterPro" id="IPR036670">
    <property type="entry name" value="SecA_X-link_sf"/>
</dbReference>
<dbReference type="NCBIfam" id="NF006630">
    <property type="entry name" value="PRK09200.1"/>
    <property type="match status" value="1"/>
</dbReference>
<dbReference type="NCBIfam" id="NF009538">
    <property type="entry name" value="PRK12904.1"/>
    <property type="match status" value="1"/>
</dbReference>
<dbReference type="NCBIfam" id="TIGR00963">
    <property type="entry name" value="secA"/>
    <property type="match status" value="1"/>
</dbReference>
<dbReference type="PANTHER" id="PTHR30612:SF0">
    <property type="entry name" value="CHLOROPLAST PROTEIN-TRANSPORTING ATPASE"/>
    <property type="match status" value="1"/>
</dbReference>
<dbReference type="PANTHER" id="PTHR30612">
    <property type="entry name" value="SECA INNER MEMBRANE COMPONENT OF SEC PROTEIN SECRETION SYSTEM"/>
    <property type="match status" value="1"/>
</dbReference>
<dbReference type="Pfam" id="PF21090">
    <property type="entry name" value="P-loop_SecA"/>
    <property type="match status" value="2"/>
</dbReference>
<dbReference type="Pfam" id="PF07517">
    <property type="entry name" value="SecA_DEAD"/>
    <property type="match status" value="1"/>
</dbReference>
<dbReference type="Pfam" id="PF01043">
    <property type="entry name" value="SecA_PP_bind"/>
    <property type="match status" value="1"/>
</dbReference>
<dbReference type="Pfam" id="PF07516">
    <property type="entry name" value="SecA_SW"/>
    <property type="match status" value="1"/>
</dbReference>
<dbReference type="PRINTS" id="PR00906">
    <property type="entry name" value="SECA"/>
</dbReference>
<dbReference type="SMART" id="SM00957">
    <property type="entry name" value="SecA_DEAD"/>
    <property type="match status" value="1"/>
</dbReference>
<dbReference type="SMART" id="SM00958">
    <property type="entry name" value="SecA_PP_bind"/>
    <property type="match status" value="1"/>
</dbReference>
<dbReference type="SUPFAM" id="SSF81886">
    <property type="entry name" value="Helical scaffold and wing domains of SecA"/>
    <property type="match status" value="1"/>
</dbReference>
<dbReference type="SUPFAM" id="SSF52540">
    <property type="entry name" value="P-loop containing nucleoside triphosphate hydrolases"/>
    <property type="match status" value="2"/>
</dbReference>
<dbReference type="SUPFAM" id="SSF81767">
    <property type="entry name" value="Pre-protein crosslinking domain of SecA"/>
    <property type="match status" value="1"/>
</dbReference>
<dbReference type="PROSITE" id="PS01312">
    <property type="entry name" value="SECA"/>
    <property type="match status" value="1"/>
</dbReference>
<dbReference type="PROSITE" id="PS51196">
    <property type="entry name" value="SECA_MOTOR_DEAD"/>
    <property type="match status" value="1"/>
</dbReference>
<protein>
    <recommendedName>
        <fullName evidence="1">Protein translocase subunit SecA</fullName>
        <ecNumber evidence="1">7.4.2.8</ecNumber>
    </recommendedName>
</protein>
<comment type="function">
    <text evidence="1">Part of the Sec protein translocase complex. Interacts with the SecYEG preprotein conducting channel. Has a central role in coupling the hydrolysis of ATP to the transfer of proteins into and across the cell membrane, serving as an ATP-driven molecular motor driving the stepwise translocation of polypeptide chains across the membrane.</text>
</comment>
<comment type="catalytic activity">
    <reaction evidence="1">
        <text>ATP + H2O + cellular proteinSide 1 = ADP + phosphate + cellular proteinSide 2.</text>
        <dbReference type="EC" id="7.4.2.8"/>
    </reaction>
</comment>
<comment type="subunit">
    <text evidence="1">Monomer and homodimer. Part of the essential Sec protein translocation apparatus which comprises SecA, SecYEG and auxiliary proteins SecDF. Other proteins may also be involved.</text>
</comment>
<comment type="subcellular location">
    <subcellularLocation>
        <location evidence="1">Cell membrane</location>
        <topology evidence="1">Peripheral membrane protein</topology>
        <orientation evidence="1">Cytoplasmic side</orientation>
    </subcellularLocation>
    <subcellularLocation>
        <location evidence="1">Cytoplasm</location>
    </subcellularLocation>
    <text evidence="1">Distribution is 50-50.</text>
</comment>
<comment type="similarity">
    <text evidence="1">Belongs to the SecA family.</text>
</comment>
<sequence length="787" mass="89521">MANFLKSWVESDKREVGRMGKIADKVQSYEDEYSNLSDEALQAKTPEFKTRLANGETLDDILPEAFAVAREGAKRVLGLFPFRVQIIGGITLHEGNIAEMKTGEGKTLTATMPVYLNALAGQGVHVVTVNEYLSSRDATEMGELYNWLGLSVGLNLNAKTPEEKRDAYNSDITYSTNSELGFDYLRDNMVVYKEEMVQRPLNFAIVDEVDSILIDEARTPLIISGQAEKSTALYIRADRFVKTLKEDADYKIDWPTKTISLTEAGIGKAEANFGLDNLYDIENTALTHHLDESLRANFIMLKDIDYVVQDGEVLIVDQFTGRVMDGRRYSDGLHQAIEAKEGVEIQDETKTMANITYQNYFRMYNKLSGMTGTAKTEEEEFREIYNMEVISIPTNRPIARNDKSDVLYPTLESKFHAVVKDIKSRYEKGQPTLVGTVAVESSELLSRLLDENNVPHAVLNAKNHFKEAEIIMNAGQRGAVTIATNMAGRGTDIKLGPGVTDLGGLAVIGTERHESRRIDNQLRGRAGRQGDPGETQFYMSLEDDLMKRFGSERIKAFLDRMKISDDDAVIQSKMITRQVEAAQKRVEGNNYDTRKQTLQYDDVMREQREVIYKQRMQVIMAEDNLKEVIMPMISRTVKRIVQLHTQGDTADWNLEAIHDFATTSMVSEEQLTLEKLQGKSAEEIEALLMTFAEKNYATKQKQLSDENQMLEFEKVVILRVVDERWTDHIDAMDQLRNSIGLRGYGQMNPLVEYQEEGYRMFEEMISDIDYDTTRLFMKAEIRQNIRR</sequence>
<evidence type="ECO:0000255" key="1">
    <source>
        <dbReference type="HAMAP-Rule" id="MF_01382"/>
    </source>
</evidence>
<reference key="1">
    <citation type="journal article" date="2005" name="Nat. Biotechnol.">
        <title>The complete genome sequence of the meat-borne lactic acid bacterium Lactobacillus sakei 23K.</title>
        <authorList>
            <person name="Chaillou S."/>
            <person name="Champomier-Verges M.-C."/>
            <person name="Cornet M."/>
            <person name="Crutz-Le Coq A.-M."/>
            <person name="Dudez A.-M."/>
            <person name="Martin V."/>
            <person name="Beaufils S."/>
            <person name="Darbon-Rongere E."/>
            <person name="Bossy R."/>
            <person name="Loux V."/>
            <person name="Zagorec M."/>
        </authorList>
    </citation>
    <scope>NUCLEOTIDE SEQUENCE [LARGE SCALE GENOMIC DNA]</scope>
    <source>
        <strain>23K</strain>
    </source>
</reference>
<name>SECA_LATSS</name>
<organism>
    <name type="scientific">Latilactobacillus sakei subsp. sakei (strain 23K)</name>
    <name type="common">Lactobacillus sakei subsp. sakei</name>
    <dbReference type="NCBI Taxonomy" id="314315"/>
    <lineage>
        <taxon>Bacteria</taxon>
        <taxon>Bacillati</taxon>
        <taxon>Bacillota</taxon>
        <taxon>Bacilli</taxon>
        <taxon>Lactobacillales</taxon>
        <taxon>Lactobacillaceae</taxon>
        <taxon>Latilactobacillus</taxon>
    </lineage>
</organism>
<gene>
    <name evidence="1" type="primary">secA</name>
    <name type="ordered locus">LCA_0495</name>
</gene>
<accession>Q38YD2</accession>
<keyword id="KW-0067">ATP-binding</keyword>
<keyword id="KW-1003">Cell membrane</keyword>
<keyword id="KW-0963">Cytoplasm</keyword>
<keyword id="KW-0472">Membrane</keyword>
<keyword id="KW-0547">Nucleotide-binding</keyword>
<keyword id="KW-0653">Protein transport</keyword>
<keyword id="KW-1185">Reference proteome</keyword>
<keyword id="KW-1278">Translocase</keyword>
<keyword id="KW-0811">Translocation</keyword>
<keyword id="KW-0813">Transport</keyword>